<reference key="1">
    <citation type="journal article" date="1989" name="J. Biol. Chem.">
        <title>Cloning and characterization of the yeast CKI gene encoding choline kinase and its expression in Escherichia coli.</title>
        <authorList>
            <person name="Hosaka K."/>
            <person name="Kodaki T."/>
            <person name="Yamashita S."/>
        </authorList>
    </citation>
    <scope>NUCLEOTIDE SEQUENCE [GENOMIC DNA]</scope>
    <scope>FUNCTION</scope>
</reference>
<reference key="2">
    <citation type="journal article" date="1997" name="Nature">
        <title>The nucleotide sequence of Saccharomyces cerevisiae chromosome XII.</title>
        <authorList>
            <person name="Johnston M."/>
            <person name="Hillier L.W."/>
            <person name="Riles L."/>
            <person name="Albermann K."/>
            <person name="Andre B."/>
            <person name="Ansorge W."/>
            <person name="Benes V."/>
            <person name="Brueckner M."/>
            <person name="Delius H."/>
            <person name="Dubois E."/>
            <person name="Duesterhoeft A."/>
            <person name="Entian K.-D."/>
            <person name="Floeth M."/>
            <person name="Goffeau A."/>
            <person name="Hebling U."/>
            <person name="Heumann K."/>
            <person name="Heuss-Neitzel D."/>
            <person name="Hilbert H."/>
            <person name="Hilger F."/>
            <person name="Kleine K."/>
            <person name="Koetter P."/>
            <person name="Louis E.J."/>
            <person name="Messenguy F."/>
            <person name="Mewes H.-W."/>
            <person name="Miosga T."/>
            <person name="Moestl D."/>
            <person name="Mueller-Auer S."/>
            <person name="Nentwich U."/>
            <person name="Obermaier B."/>
            <person name="Piravandi E."/>
            <person name="Pohl T.M."/>
            <person name="Portetelle D."/>
            <person name="Purnelle B."/>
            <person name="Rechmann S."/>
            <person name="Rieger M."/>
            <person name="Rinke M."/>
            <person name="Rose M."/>
            <person name="Scharfe M."/>
            <person name="Scherens B."/>
            <person name="Scholler P."/>
            <person name="Schwager C."/>
            <person name="Schwarz S."/>
            <person name="Underwood A.P."/>
            <person name="Urrestarazu L.A."/>
            <person name="Vandenbol M."/>
            <person name="Verhasselt P."/>
            <person name="Vierendeels F."/>
            <person name="Voet M."/>
            <person name="Volckaert G."/>
            <person name="Voss H."/>
            <person name="Wambutt R."/>
            <person name="Wedler E."/>
            <person name="Wedler H."/>
            <person name="Zimmermann F.K."/>
            <person name="Zollner A."/>
            <person name="Hani J."/>
            <person name="Hoheisel J.D."/>
        </authorList>
    </citation>
    <scope>NUCLEOTIDE SEQUENCE [LARGE SCALE GENOMIC DNA]</scope>
    <source>
        <strain>ATCC 204508 / S288c</strain>
    </source>
</reference>
<reference key="3">
    <citation type="journal article" date="2014" name="G3 (Bethesda)">
        <title>The reference genome sequence of Saccharomyces cerevisiae: Then and now.</title>
        <authorList>
            <person name="Engel S.R."/>
            <person name="Dietrich F.S."/>
            <person name="Fisk D.G."/>
            <person name="Binkley G."/>
            <person name="Balakrishnan R."/>
            <person name="Costanzo M.C."/>
            <person name="Dwight S.S."/>
            <person name="Hitz B.C."/>
            <person name="Karra K."/>
            <person name="Nash R.S."/>
            <person name="Weng S."/>
            <person name="Wong E.D."/>
            <person name="Lloyd P."/>
            <person name="Skrzypek M.S."/>
            <person name="Miyasato S.R."/>
            <person name="Simison M."/>
            <person name="Cherry J.M."/>
        </authorList>
    </citation>
    <scope>GENOME REANNOTATION</scope>
    <source>
        <strain>ATCC 204508 / S288c</strain>
    </source>
</reference>
<reference key="4">
    <citation type="journal article" date="2007" name="Genome Res.">
        <title>Approaching a complete repository of sequence-verified protein-encoding clones for Saccharomyces cerevisiae.</title>
        <authorList>
            <person name="Hu Y."/>
            <person name="Rolfs A."/>
            <person name="Bhullar B."/>
            <person name="Murthy T.V.S."/>
            <person name="Zhu C."/>
            <person name="Berger M.F."/>
            <person name="Camargo A.A."/>
            <person name="Kelley F."/>
            <person name="McCarron S."/>
            <person name="Jepson D."/>
            <person name="Richardson A."/>
            <person name="Raphael J."/>
            <person name="Moreira D."/>
            <person name="Taycher E."/>
            <person name="Zuo D."/>
            <person name="Mohr S."/>
            <person name="Kane M.F."/>
            <person name="Williamson J."/>
            <person name="Simpson A.J.G."/>
            <person name="Bulyk M.L."/>
            <person name="Harlow E."/>
            <person name="Marsischky G."/>
            <person name="Kolodner R.D."/>
            <person name="LaBaer J."/>
        </authorList>
    </citation>
    <scope>NUCLEOTIDE SEQUENCE [GENOMIC DNA]</scope>
    <source>
        <strain>ATCC 204508 / S288c</strain>
    </source>
</reference>
<reference key="5">
    <citation type="journal article" date="1998" name="J. Biol. Chem.">
        <title>Expression, purification, and characterization of choline kinase, product of the CKI gene from Saccharomyces cerevisiae.</title>
        <authorList>
            <person name="Kim K.H."/>
            <person name="Voelker D.R."/>
            <person name="Flocco M.T."/>
            <person name="Carman G.M."/>
        </authorList>
    </citation>
    <scope>PROTEIN SEQUENCE OF 2-20</scope>
    <scope>FUNCTION</scope>
    <scope>CATALYTIC ACTIVITY</scope>
    <scope>BIOPHYSICOCHEMICAL PROPERTIES</scope>
    <scope>COFACTOR</scope>
</reference>
<reference key="6">
    <citation type="journal article" date="1999" name="J. Biol. Chem.">
        <title>Isolation and characterization of the Saccharomyces cerevisiae EKI1 gene encoding ethanolamine kinase.</title>
        <authorList>
            <person name="Kim K."/>
            <person name="Kim K.-H."/>
            <person name="Storey M.K."/>
            <person name="Voelker D.R."/>
            <person name="Carman G.M."/>
        </authorList>
    </citation>
    <scope>FUNCTION</scope>
    <scope>CATALYTIC ACTIVITY</scope>
</reference>
<reference key="7">
    <citation type="journal article" date="2001" name="J. Biol. Chem.">
        <title>Turnover of phosphatidylcholine in Saccharomyces cerevisiae. The role of the CDP-choline pathway.</title>
        <authorList>
            <person name="Dowd S.R."/>
            <person name="Bier M.E."/>
            <person name="Patton-Vogt J.L."/>
        </authorList>
    </citation>
    <scope>PATHWAY</scope>
</reference>
<reference key="8">
    <citation type="journal article" date="2002" name="J. Biol. Chem.">
        <title>Phosphorylation of Saccharomyces cerevisiae choline kinase on Ser30 and Ser85 by protein kinase A regulates phosphatidylcholine synthesis by the CDP-choline pathway.</title>
        <authorList>
            <person name="Yu Y."/>
            <person name="Sreenivas A."/>
            <person name="Ostrander D.B."/>
            <person name="Carman G.M."/>
        </authorList>
    </citation>
    <scope>PHOSPHORYLATION AT SER-30 AND SER-85</scope>
    <scope>MUTAGENESIS OF SER-30 AND SER-85</scope>
</reference>
<reference key="9">
    <citation type="journal article" date="2003" name="Nature">
        <title>Global analysis of protein localization in budding yeast.</title>
        <authorList>
            <person name="Huh W.-K."/>
            <person name="Falvo J.V."/>
            <person name="Gerke L.C."/>
            <person name="Carroll A.S."/>
            <person name="Howson R.W."/>
            <person name="Weissman J.S."/>
            <person name="O'Shea E.K."/>
        </authorList>
    </citation>
    <scope>SUBCELLULAR LOCATION [LARGE SCALE ANALYSIS]</scope>
</reference>
<reference key="10">
    <citation type="journal article" date="2003" name="Nature">
        <title>Global analysis of protein expression in yeast.</title>
        <authorList>
            <person name="Ghaemmaghami S."/>
            <person name="Huh W.-K."/>
            <person name="Bower K."/>
            <person name="Howson R.W."/>
            <person name="Belle A."/>
            <person name="Dephoure N."/>
            <person name="O'Shea E.K."/>
            <person name="Weissman J.S."/>
        </authorList>
    </citation>
    <scope>LEVEL OF PROTEIN EXPRESSION [LARGE SCALE ANALYSIS]</scope>
</reference>
<reference key="11">
    <citation type="journal article" date="2005" name="Mol. Cell. Proteomics">
        <title>Quantitative phosphoproteomics applied to the yeast pheromone signaling pathway.</title>
        <authorList>
            <person name="Gruhler A."/>
            <person name="Olsen J.V."/>
            <person name="Mohammed S."/>
            <person name="Mortensen P."/>
            <person name="Faergeman N.J."/>
            <person name="Mann M."/>
            <person name="Jensen O.N."/>
        </authorList>
    </citation>
    <scope>IDENTIFICATION BY MASS SPECTROMETRY [LARGE SCALE ANALYSIS]</scope>
    <source>
        <strain>YAL6B</strain>
    </source>
</reference>
<reference key="12">
    <citation type="journal article" date="2007" name="J. Proteome Res.">
        <title>Large-scale phosphorylation analysis of alpha-factor-arrested Saccharomyces cerevisiae.</title>
        <authorList>
            <person name="Li X."/>
            <person name="Gerber S.A."/>
            <person name="Rudner A.D."/>
            <person name="Beausoleil S.A."/>
            <person name="Haas W."/>
            <person name="Villen J."/>
            <person name="Elias J.E."/>
            <person name="Gygi S.P."/>
        </authorList>
    </citation>
    <scope>IDENTIFICATION BY MASS SPECTROMETRY [LARGE SCALE ANALYSIS]</scope>
    <source>
        <strain>ADR376</strain>
    </source>
</reference>
<reference key="13">
    <citation type="journal article" date="2008" name="Mol. Cell. Biol.">
        <title>Phosphorylation by casein kinase 2 regulates Nap1 localization and function.</title>
        <authorList>
            <person name="Calvert M.E.K."/>
            <person name="Keck K.M."/>
            <person name="Ptak C."/>
            <person name="Shabanowitz J."/>
            <person name="Hunt D.F."/>
            <person name="Pemberton L.F."/>
        </authorList>
    </citation>
    <scope>INTERACTION WITH NAP1</scope>
    <scope>IDENTIFICATION BY MASS SPECTROMETRY</scope>
</reference>
<reference key="14">
    <citation type="journal article" date="2008" name="Mol. Cell. Proteomics">
        <title>A multidimensional chromatography technology for in-depth phosphoproteome analysis.</title>
        <authorList>
            <person name="Albuquerque C.P."/>
            <person name="Smolka M.B."/>
            <person name="Payne S.H."/>
            <person name="Bafna V."/>
            <person name="Eng J."/>
            <person name="Zhou H."/>
        </authorList>
    </citation>
    <scope>IDENTIFICATION BY MASS SPECTROMETRY [LARGE SCALE ANALYSIS]</scope>
</reference>
<reference key="15">
    <citation type="journal article" date="2009" name="Science">
        <title>Global analysis of Cdk1 substrate phosphorylation sites provides insights into evolution.</title>
        <authorList>
            <person name="Holt L.J."/>
            <person name="Tuch B.B."/>
            <person name="Villen J."/>
            <person name="Johnson A.D."/>
            <person name="Gygi S.P."/>
            <person name="Morgan D.O."/>
        </authorList>
    </citation>
    <scope>PHOSPHORYLATION [LARGE SCALE ANALYSIS] AT SER-48; SER-51 AND THR-54</scope>
    <scope>IDENTIFICATION BY MASS SPECTROMETRY [LARGE SCALE ANALYSIS]</scope>
</reference>
<dbReference type="EC" id="2.7.1.32" evidence="2 7"/>
<dbReference type="EMBL" id="J04454">
    <property type="protein sequence ID" value="AAA34499.1"/>
    <property type="molecule type" value="Genomic_DNA"/>
</dbReference>
<dbReference type="EMBL" id="X91258">
    <property type="protein sequence ID" value="CAA62646.1"/>
    <property type="molecule type" value="Genomic_DNA"/>
</dbReference>
<dbReference type="EMBL" id="Z73305">
    <property type="protein sequence ID" value="CAA97704.1"/>
    <property type="molecule type" value="Genomic_DNA"/>
</dbReference>
<dbReference type="EMBL" id="U53881">
    <property type="protein sequence ID" value="AAB82396.1"/>
    <property type="molecule type" value="Genomic_DNA"/>
</dbReference>
<dbReference type="EMBL" id="AY692779">
    <property type="protein sequence ID" value="AAT92798.1"/>
    <property type="molecule type" value="Genomic_DNA"/>
</dbReference>
<dbReference type="EMBL" id="BK006945">
    <property type="protein sequence ID" value="DAA09444.1"/>
    <property type="molecule type" value="Genomic_DNA"/>
</dbReference>
<dbReference type="PIR" id="A32034">
    <property type="entry name" value="A32034"/>
</dbReference>
<dbReference type="RefSeq" id="NP_013234.1">
    <property type="nucleotide sequence ID" value="NM_001182020.1"/>
</dbReference>
<dbReference type="SMR" id="P20485"/>
<dbReference type="BioGRID" id="31402">
    <property type="interactions" value="128"/>
</dbReference>
<dbReference type="DIP" id="DIP-2617N"/>
<dbReference type="FunCoup" id="P20485">
    <property type="interactions" value="478"/>
</dbReference>
<dbReference type="IntAct" id="P20485">
    <property type="interactions" value="9"/>
</dbReference>
<dbReference type="MINT" id="P20485"/>
<dbReference type="STRING" id="4932.YLR133W"/>
<dbReference type="SwissLipids" id="SLP:000000066"/>
<dbReference type="GlyGen" id="P20485">
    <property type="glycosylation" value="1 site, 1 O-linked glycan (1 site)"/>
</dbReference>
<dbReference type="iPTMnet" id="P20485"/>
<dbReference type="PaxDb" id="4932-YLR133W"/>
<dbReference type="PeptideAtlas" id="P20485"/>
<dbReference type="EnsemblFungi" id="YLR133W_mRNA">
    <property type="protein sequence ID" value="YLR133W"/>
    <property type="gene ID" value="YLR133W"/>
</dbReference>
<dbReference type="GeneID" id="850824"/>
<dbReference type="KEGG" id="sce:YLR133W"/>
<dbReference type="AGR" id="SGD:S000004123"/>
<dbReference type="SGD" id="S000004123">
    <property type="gene designation" value="CKI1"/>
</dbReference>
<dbReference type="VEuPathDB" id="FungiDB:YLR133W"/>
<dbReference type="eggNOG" id="KOG2686">
    <property type="taxonomic scope" value="Eukaryota"/>
</dbReference>
<dbReference type="GeneTree" id="ENSGT00950000182939"/>
<dbReference type="HOGENOM" id="CLU_012712_4_2_1"/>
<dbReference type="InParanoid" id="P20485"/>
<dbReference type="OMA" id="CEQVINW"/>
<dbReference type="OrthoDB" id="10267235at2759"/>
<dbReference type="BioCyc" id="MetaCyc:YLR133W-MONOMER"/>
<dbReference type="BioCyc" id="YEAST:YLR133W-MONOMER"/>
<dbReference type="Reactome" id="R-SCE-1483191">
    <property type="pathway name" value="Synthesis of PC"/>
</dbReference>
<dbReference type="Reactome" id="R-SCE-1483213">
    <property type="pathway name" value="Synthesis of PE"/>
</dbReference>
<dbReference type="UniPathway" id="UPA00753">
    <property type="reaction ID" value="UER00737"/>
</dbReference>
<dbReference type="BioGRID-ORCS" id="850824">
    <property type="hits" value="0 hits in 10 CRISPR screens"/>
</dbReference>
<dbReference type="CD-CODE" id="E03F929F">
    <property type="entry name" value="Stress granule"/>
</dbReference>
<dbReference type="PRO" id="PR:P20485"/>
<dbReference type="Proteomes" id="UP000002311">
    <property type="component" value="Chromosome XII"/>
</dbReference>
<dbReference type="RNAct" id="P20485">
    <property type="molecule type" value="protein"/>
</dbReference>
<dbReference type="GO" id="GO:0005737">
    <property type="term" value="C:cytoplasm"/>
    <property type="evidence" value="ECO:0007005"/>
    <property type="project" value="SGD"/>
</dbReference>
<dbReference type="GO" id="GO:0005524">
    <property type="term" value="F:ATP binding"/>
    <property type="evidence" value="ECO:0007669"/>
    <property type="project" value="UniProtKB-KW"/>
</dbReference>
<dbReference type="GO" id="GO:0004103">
    <property type="term" value="F:choline kinase activity"/>
    <property type="evidence" value="ECO:0000314"/>
    <property type="project" value="SGD"/>
</dbReference>
<dbReference type="GO" id="GO:0004305">
    <property type="term" value="F:ethanolamine kinase activity"/>
    <property type="evidence" value="ECO:0000315"/>
    <property type="project" value="SGD"/>
</dbReference>
<dbReference type="GO" id="GO:0006656">
    <property type="term" value="P:phosphatidylcholine biosynthetic process"/>
    <property type="evidence" value="ECO:0000315"/>
    <property type="project" value="SGD"/>
</dbReference>
<dbReference type="GO" id="GO:0006646">
    <property type="term" value="P:phosphatidylethanolamine biosynthetic process"/>
    <property type="evidence" value="ECO:0000315"/>
    <property type="project" value="SGD"/>
</dbReference>
<dbReference type="CDD" id="cd05157">
    <property type="entry name" value="ETNK_euk"/>
    <property type="match status" value="1"/>
</dbReference>
<dbReference type="Gene3D" id="3.90.1200.10">
    <property type="match status" value="1"/>
</dbReference>
<dbReference type="Gene3D" id="3.30.200.20">
    <property type="entry name" value="Phosphorylase Kinase, domain 1"/>
    <property type="match status" value="1"/>
</dbReference>
<dbReference type="InterPro" id="IPR007521">
    <property type="entry name" value="Choline_kin_N"/>
</dbReference>
<dbReference type="InterPro" id="IPR011009">
    <property type="entry name" value="Kinase-like_dom_sf"/>
</dbReference>
<dbReference type="PANTHER" id="PTHR22603">
    <property type="entry name" value="CHOLINE/ETHANOALAMINE KINASE"/>
    <property type="match status" value="1"/>
</dbReference>
<dbReference type="PANTHER" id="PTHR22603:SF93">
    <property type="entry name" value="RE24176P"/>
    <property type="match status" value="1"/>
</dbReference>
<dbReference type="Pfam" id="PF04428">
    <property type="entry name" value="Choline_kin_N"/>
    <property type="match status" value="1"/>
</dbReference>
<dbReference type="Pfam" id="PF01633">
    <property type="entry name" value="Choline_kinase"/>
    <property type="match status" value="1"/>
</dbReference>
<dbReference type="SUPFAM" id="SSF56112">
    <property type="entry name" value="Protein kinase-like (PK-like)"/>
    <property type="match status" value="1"/>
</dbReference>
<keyword id="KW-0067">ATP-binding</keyword>
<keyword id="KW-0963">Cytoplasm</keyword>
<keyword id="KW-0903">Direct protein sequencing</keyword>
<keyword id="KW-0418">Kinase</keyword>
<keyword id="KW-0444">Lipid biosynthesis</keyword>
<keyword id="KW-0443">Lipid metabolism</keyword>
<keyword id="KW-0547">Nucleotide-binding</keyword>
<keyword id="KW-0594">Phospholipid biosynthesis</keyword>
<keyword id="KW-1208">Phospholipid metabolism</keyword>
<keyword id="KW-0597">Phosphoprotein</keyword>
<keyword id="KW-1185">Reference proteome</keyword>
<keyword id="KW-0808">Transferase</keyword>
<protein>
    <recommendedName>
        <fullName evidence="11">Choline kinase</fullName>
        <ecNumber evidence="2 7">2.7.1.32</ecNumber>
    </recommendedName>
    <alternativeName>
        <fullName evidence="10">ATP:choline phosphotransferase</fullName>
    </alternativeName>
</protein>
<organism>
    <name type="scientific">Saccharomyces cerevisiae (strain ATCC 204508 / S288c)</name>
    <name type="common">Baker's yeast</name>
    <dbReference type="NCBI Taxonomy" id="559292"/>
    <lineage>
        <taxon>Eukaryota</taxon>
        <taxon>Fungi</taxon>
        <taxon>Dikarya</taxon>
        <taxon>Ascomycota</taxon>
        <taxon>Saccharomycotina</taxon>
        <taxon>Saccharomycetes</taxon>
        <taxon>Saccharomycetales</taxon>
        <taxon>Saccharomycetaceae</taxon>
        <taxon>Saccharomyces</taxon>
    </lineage>
</organism>
<comment type="function">
    <text evidence="2 7 8">Catalyzes the committed step in the synthesis of phosphatidylcholine by the CDP-choline pathway (PubMed:10329685, PubMed:2536698, PubMed:9506987). Also exhibits ethanolamine kinase activity but it is a poor substrate at 14% efficiency compared with choline (PubMed:2536698, PubMed:9506987).</text>
</comment>
<comment type="catalytic activity">
    <reaction evidence="2 7 8">
        <text>choline + ATP = phosphocholine + ADP + H(+)</text>
        <dbReference type="Rhea" id="RHEA:12837"/>
        <dbReference type="ChEBI" id="CHEBI:15354"/>
        <dbReference type="ChEBI" id="CHEBI:15378"/>
        <dbReference type="ChEBI" id="CHEBI:30616"/>
        <dbReference type="ChEBI" id="CHEBI:295975"/>
        <dbReference type="ChEBI" id="CHEBI:456216"/>
        <dbReference type="EC" id="2.7.1.32"/>
    </reaction>
    <physiologicalReaction direction="left-to-right" evidence="12">
        <dbReference type="Rhea" id="RHEA:12838"/>
    </physiologicalReaction>
</comment>
<comment type="catalytic activity">
    <reaction evidence="2 7">
        <text>ethanolamine + ATP = phosphoethanolamine + ADP + H(+)</text>
        <dbReference type="Rhea" id="RHEA:13069"/>
        <dbReference type="ChEBI" id="CHEBI:15378"/>
        <dbReference type="ChEBI" id="CHEBI:30616"/>
        <dbReference type="ChEBI" id="CHEBI:57603"/>
        <dbReference type="ChEBI" id="CHEBI:58190"/>
        <dbReference type="ChEBI" id="CHEBI:456216"/>
    </reaction>
    <physiologicalReaction direction="left-to-right" evidence="12 14">
        <dbReference type="Rhea" id="RHEA:13070"/>
    </physiologicalReaction>
</comment>
<comment type="cofactor">
    <cofactor evidence="8">
        <name>Mg(2+)</name>
        <dbReference type="ChEBI" id="CHEBI:18420"/>
    </cofactor>
</comment>
<comment type="biophysicochemical properties">
    <kinetics>
        <KM evidence="8">90 uM for ATP</KM>
        <KM evidence="8">0.27 mM for choline</KM>
        <Vmax evidence="8">138.7 umol/min/mg enzyme for choline</Vmax>
    </kinetics>
    <phDependence>
        <text evidence="8">Optimum pH is 9.5-12.</text>
    </phDependence>
    <temperatureDependence>
        <text evidence="8">Optimum temperature is 30 degrees Celsius.</text>
    </temperatureDependence>
</comment>
<comment type="pathway">
    <text evidence="13">Phospholipid metabolism; phosphatidylcholine biosynthesis; phosphocholine from choline: step 1/1.</text>
</comment>
<comment type="subunit">
    <text evidence="6">Monomer. Interacts with NAP1.</text>
</comment>
<comment type="interaction">
    <interactant intactId="EBI-9699">
        <id>P20485</id>
    </interactant>
    <interactant intactId="EBI-11850">
        <id>P25293</id>
        <label>NAP1</label>
    </interactant>
    <organismsDiffer>false</organismsDiffer>
    <experiments>5</experiments>
</comment>
<comment type="subcellular location">
    <subcellularLocation>
        <location evidence="4">Cytoplasm</location>
    </subcellularLocation>
</comment>
<comment type="miscellaneous">
    <text evidence="5">Present with 3930 molecules/cell in log phase SD medium.</text>
</comment>
<comment type="similarity">
    <text evidence="11">Belongs to the choline/ethanolamine kinase family.</text>
</comment>
<name>KICH_YEAST</name>
<evidence type="ECO:0000256" key="1">
    <source>
        <dbReference type="SAM" id="MobiDB-lite"/>
    </source>
</evidence>
<evidence type="ECO:0000269" key="2">
    <source>
    </source>
</evidence>
<evidence type="ECO:0000269" key="3">
    <source>
    </source>
</evidence>
<evidence type="ECO:0000269" key="4">
    <source>
    </source>
</evidence>
<evidence type="ECO:0000269" key="5">
    <source>
    </source>
</evidence>
<evidence type="ECO:0000269" key="6">
    <source>
    </source>
</evidence>
<evidence type="ECO:0000269" key="7">
    <source>
    </source>
</evidence>
<evidence type="ECO:0000269" key="8">
    <source>
    </source>
</evidence>
<evidence type="ECO:0000303" key="9">
    <source>
    </source>
</evidence>
<evidence type="ECO:0000303" key="10">
    <source>
    </source>
</evidence>
<evidence type="ECO:0000305" key="11"/>
<evidence type="ECO:0000305" key="12">
    <source>
    </source>
</evidence>
<evidence type="ECO:0000305" key="13">
    <source>
    </source>
</evidence>
<evidence type="ECO:0000305" key="14">
    <source>
    </source>
</evidence>
<evidence type="ECO:0007744" key="15">
    <source>
    </source>
</evidence>
<proteinExistence type="evidence at protein level"/>
<sequence length="582" mass="66317">MVQESRPGSVRSYSVGYQARSRSSSQRRHSLTRQRSSQRLIRTISIESDVSNITDDDDLRAVNEGVAGVQLDVSETANKGPRRASATDVTDSLGSTSSEYIEIPFVKETLDASLPSDYLKQDILNLIQSLKISKWYNNKKIQPVAQDMNLVKISGAMTNAIFKVEYPKLPSLLLRIYGPNIDNIIDREYELQILARLSLKNIGPSLYGCFVNGRFEQFLENSKTLTKDDIRNWKNSQRIARRMKELHVGVPLLSSERKNGSACWQKINQWLRTIEKVDQWVGDPKNIENSLLCENWSKFMDIVDRYHKWLISQEQGIEQVNKNLIFCHNDAQYGNLLFTAPVMNTPSLYTAPSSTSLTSQSSSLFPSSSNVIVDDIINPPKQEQSQDSKLVVIDFEYAGANPAAYDLANHLSEWMYDYNNAKAPHQCHADRYPDKEQVLNFLYSYVSHLRGGAKEPIDEEVQRLYKSIIQWRPTVQLFWSLWAILQSGKLEKKEASTAITREEIGPNGKKYIIKTEPESPEEDFVENDDEPEAGVSIDTFDYMAYGRDKIAVFWGDLIGLGIITEEECKNFSSFKFLDTSYL</sequence>
<gene>
    <name evidence="9" type="primary">CKI1</name>
    <name type="synonym">CKI</name>
    <name type="ordered locus">YLR133W</name>
    <name type="ORF">L3130</name>
    <name type="ORF">L9606.8</name>
</gene>
<accession>P20485</accession>
<accession>D6VYC8</accession>
<feature type="initiator methionine" description="Removed" evidence="8">
    <location>
        <position position="1"/>
    </location>
</feature>
<feature type="chain" id="PRO_0000206226" description="Choline kinase">
    <location>
        <begin position="2"/>
        <end position="582"/>
    </location>
</feature>
<feature type="region of interest" description="Disordered" evidence="1">
    <location>
        <begin position="1"/>
        <end position="36"/>
    </location>
</feature>
<feature type="modified residue" description="Phosphoserine; by PKA" evidence="3">
    <location>
        <position position="30"/>
    </location>
</feature>
<feature type="modified residue" description="Phosphoserine" evidence="15">
    <location>
        <position position="48"/>
    </location>
</feature>
<feature type="modified residue" description="Phosphoserine" evidence="15">
    <location>
        <position position="51"/>
    </location>
</feature>
<feature type="modified residue" description="Phosphothreonine" evidence="15">
    <location>
        <position position="54"/>
    </location>
</feature>
<feature type="modified residue" description="Phosphoserine; by PKA" evidence="3">
    <location>
        <position position="85"/>
    </location>
</feature>
<feature type="mutagenesis site" description="Decrease in activity and in phosphorylation by PKA. No phosphorylation by PKA, and strong decrease in activity; when associated with A-85." evidence="3">
    <original>S</original>
    <variation>A</variation>
    <location>
        <position position="30"/>
    </location>
</feature>
<feature type="mutagenesis site" description="No phosphorylation by PKA, and strong decrease in activity; when associated with A-30." evidence="3">
    <original>S</original>
    <variation>A</variation>
    <location>
        <position position="85"/>
    </location>
</feature>